<protein>
    <recommendedName>
        <fullName>COPII coat assembly protein SEC16</fullName>
    </recommendedName>
    <alternativeName>
        <fullName>Protein transport protein SEC16</fullName>
    </alternativeName>
</protein>
<keyword id="KW-0072">Autophagy</keyword>
<keyword id="KW-0256">Endoplasmic reticulum</keyword>
<keyword id="KW-0931">ER-Golgi transport</keyword>
<keyword id="KW-0472">Membrane</keyword>
<keyword id="KW-0653">Protein transport</keyword>
<keyword id="KW-1185">Reference proteome</keyword>
<keyword id="KW-0813">Transport</keyword>
<reference key="1">
    <citation type="journal article" date="2004" name="Nature">
        <title>Genome evolution in yeasts.</title>
        <authorList>
            <person name="Dujon B."/>
            <person name="Sherman D."/>
            <person name="Fischer G."/>
            <person name="Durrens P."/>
            <person name="Casaregola S."/>
            <person name="Lafontaine I."/>
            <person name="de Montigny J."/>
            <person name="Marck C."/>
            <person name="Neuveglise C."/>
            <person name="Talla E."/>
            <person name="Goffard N."/>
            <person name="Frangeul L."/>
            <person name="Aigle M."/>
            <person name="Anthouard V."/>
            <person name="Babour A."/>
            <person name="Barbe V."/>
            <person name="Barnay S."/>
            <person name="Blanchin S."/>
            <person name="Beckerich J.-M."/>
            <person name="Beyne E."/>
            <person name="Bleykasten C."/>
            <person name="Boisrame A."/>
            <person name="Boyer J."/>
            <person name="Cattolico L."/>
            <person name="Confanioleri F."/>
            <person name="de Daruvar A."/>
            <person name="Despons L."/>
            <person name="Fabre E."/>
            <person name="Fairhead C."/>
            <person name="Ferry-Dumazet H."/>
            <person name="Groppi A."/>
            <person name="Hantraye F."/>
            <person name="Hennequin C."/>
            <person name="Jauniaux N."/>
            <person name="Joyet P."/>
            <person name="Kachouri R."/>
            <person name="Kerrest A."/>
            <person name="Koszul R."/>
            <person name="Lemaire M."/>
            <person name="Lesur I."/>
            <person name="Ma L."/>
            <person name="Muller H."/>
            <person name="Nicaud J.-M."/>
            <person name="Nikolski M."/>
            <person name="Oztas S."/>
            <person name="Ozier-Kalogeropoulos O."/>
            <person name="Pellenz S."/>
            <person name="Potier S."/>
            <person name="Richard G.-F."/>
            <person name="Straub M.-L."/>
            <person name="Suleau A."/>
            <person name="Swennen D."/>
            <person name="Tekaia F."/>
            <person name="Wesolowski-Louvel M."/>
            <person name="Westhof E."/>
            <person name="Wirth B."/>
            <person name="Zeniou-Meyer M."/>
            <person name="Zivanovic Y."/>
            <person name="Bolotin-Fukuhara M."/>
            <person name="Thierry A."/>
            <person name="Bouchier C."/>
            <person name="Caudron B."/>
            <person name="Scarpelli C."/>
            <person name="Gaillardin C."/>
            <person name="Weissenbach J."/>
            <person name="Wincker P."/>
            <person name="Souciet J.-L."/>
        </authorList>
    </citation>
    <scope>NUCLEOTIDE SEQUENCE [LARGE SCALE GENOMIC DNA]</scope>
    <source>
        <strain>ATCC 36239 / CBS 767 / BCRC 21394 / JCM 1990 / NBRC 0083 / IGC 2968</strain>
    </source>
</reference>
<evidence type="ECO:0000250" key="1"/>
<evidence type="ECO:0000256" key="2">
    <source>
        <dbReference type="SAM" id="MobiDB-lite"/>
    </source>
</evidence>
<evidence type="ECO:0000305" key="3"/>
<organism>
    <name type="scientific">Debaryomyces hansenii (strain ATCC 36239 / CBS 767 / BCRC 21394 / JCM 1990 / NBRC 0083 / IGC 2968)</name>
    <name type="common">Yeast</name>
    <name type="synonym">Torulaspora hansenii</name>
    <dbReference type="NCBI Taxonomy" id="284592"/>
    <lineage>
        <taxon>Eukaryota</taxon>
        <taxon>Fungi</taxon>
        <taxon>Dikarya</taxon>
        <taxon>Ascomycota</taxon>
        <taxon>Saccharomycotina</taxon>
        <taxon>Pichiomycetes</taxon>
        <taxon>Debaryomycetaceae</taxon>
        <taxon>Debaryomyces</taxon>
    </lineage>
</organism>
<feature type="chain" id="PRO_0000295536" description="COPII coat assembly protein SEC16">
    <location>
        <begin position="1"/>
        <end position="2130"/>
    </location>
</feature>
<feature type="region of interest" description="Disordered" evidence="2">
    <location>
        <begin position="27"/>
        <end position="516"/>
    </location>
</feature>
<feature type="region of interest" description="Disordered" evidence="2">
    <location>
        <begin position="532"/>
        <end position="585"/>
    </location>
</feature>
<feature type="region of interest" description="Disordered" evidence="2">
    <location>
        <begin position="598"/>
        <end position="647"/>
    </location>
</feature>
<feature type="region of interest" description="Disordered" evidence="2">
    <location>
        <begin position="810"/>
        <end position="842"/>
    </location>
</feature>
<feature type="region of interest" description="Disordered" evidence="2">
    <location>
        <begin position="1347"/>
        <end position="1366"/>
    </location>
</feature>
<feature type="region of interest" description="Disordered" evidence="2">
    <location>
        <begin position="1374"/>
        <end position="1519"/>
    </location>
</feature>
<feature type="region of interest" description="Disordered" evidence="2">
    <location>
        <begin position="1558"/>
        <end position="1731"/>
    </location>
</feature>
<feature type="region of interest" description="Disordered" evidence="2">
    <location>
        <begin position="1753"/>
        <end position="1997"/>
    </location>
</feature>
<feature type="region of interest" description="Disordered" evidence="2">
    <location>
        <begin position="2014"/>
        <end position="2130"/>
    </location>
</feature>
<feature type="compositionally biased region" description="Basic and acidic residues" evidence="2">
    <location>
        <begin position="27"/>
        <end position="38"/>
    </location>
</feature>
<feature type="compositionally biased region" description="Basic and acidic residues" evidence="2">
    <location>
        <begin position="50"/>
        <end position="72"/>
    </location>
</feature>
<feature type="compositionally biased region" description="Basic and acidic residues" evidence="2">
    <location>
        <begin position="88"/>
        <end position="97"/>
    </location>
</feature>
<feature type="compositionally biased region" description="Polar residues" evidence="2">
    <location>
        <begin position="98"/>
        <end position="120"/>
    </location>
</feature>
<feature type="compositionally biased region" description="Basic and acidic residues" evidence="2">
    <location>
        <begin position="128"/>
        <end position="138"/>
    </location>
</feature>
<feature type="compositionally biased region" description="Basic and acidic residues" evidence="2">
    <location>
        <begin position="149"/>
        <end position="170"/>
    </location>
</feature>
<feature type="compositionally biased region" description="Basic and acidic residues" evidence="2">
    <location>
        <begin position="178"/>
        <end position="188"/>
    </location>
</feature>
<feature type="compositionally biased region" description="Basic and acidic residues" evidence="2">
    <location>
        <begin position="199"/>
        <end position="216"/>
    </location>
</feature>
<feature type="compositionally biased region" description="Polar residues" evidence="2">
    <location>
        <begin position="267"/>
        <end position="279"/>
    </location>
</feature>
<feature type="compositionally biased region" description="Polar residues" evidence="2">
    <location>
        <begin position="293"/>
        <end position="335"/>
    </location>
</feature>
<feature type="compositionally biased region" description="Basic and acidic residues" evidence="2">
    <location>
        <begin position="380"/>
        <end position="395"/>
    </location>
</feature>
<feature type="compositionally biased region" description="Low complexity" evidence="2">
    <location>
        <begin position="405"/>
        <end position="420"/>
    </location>
</feature>
<feature type="compositionally biased region" description="Polar residues" evidence="2">
    <location>
        <begin position="421"/>
        <end position="431"/>
    </location>
</feature>
<feature type="compositionally biased region" description="Basic and acidic residues" evidence="2">
    <location>
        <begin position="447"/>
        <end position="481"/>
    </location>
</feature>
<feature type="compositionally biased region" description="Basic and acidic residues" evidence="2">
    <location>
        <begin position="504"/>
        <end position="513"/>
    </location>
</feature>
<feature type="compositionally biased region" description="Low complexity" evidence="2">
    <location>
        <begin position="538"/>
        <end position="568"/>
    </location>
</feature>
<feature type="compositionally biased region" description="Polar residues" evidence="2">
    <location>
        <begin position="601"/>
        <end position="617"/>
    </location>
</feature>
<feature type="compositionally biased region" description="Polar residues" evidence="2">
    <location>
        <begin position="1374"/>
        <end position="1388"/>
    </location>
</feature>
<feature type="compositionally biased region" description="Polar residues" evidence="2">
    <location>
        <begin position="1399"/>
        <end position="1420"/>
    </location>
</feature>
<feature type="compositionally biased region" description="Polar residues" evidence="2">
    <location>
        <begin position="1428"/>
        <end position="1498"/>
    </location>
</feature>
<feature type="compositionally biased region" description="Polar residues" evidence="2">
    <location>
        <begin position="1505"/>
        <end position="1519"/>
    </location>
</feature>
<feature type="compositionally biased region" description="Polar residues" evidence="2">
    <location>
        <begin position="1559"/>
        <end position="1574"/>
    </location>
</feature>
<feature type="compositionally biased region" description="Basic and acidic residues" evidence="2">
    <location>
        <begin position="1627"/>
        <end position="1640"/>
    </location>
</feature>
<feature type="compositionally biased region" description="Polar residues" evidence="2">
    <location>
        <begin position="1701"/>
        <end position="1714"/>
    </location>
</feature>
<feature type="compositionally biased region" description="Polar residues" evidence="2">
    <location>
        <begin position="1722"/>
        <end position="1731"/>
    </location>
</feature>
<feature type="compositionally biased region" description="Basic and acidic residues" evidence="2">
    <location>
        <begin position="1753"/>
        <end position="1779"/>
    </location>
</feature>
<feature type="compositionally biased region" description="Polar residues" evidence="2">
    <location>
        <begin position="1793"/>
        <end position="1803"/>
    </location>
</feature>
<feature type="compositionally biased region" description="Polar residues" evidence="2">
    <location>
        <begin position="1819"/>
        <end position="1839"/>
    </location>
</feature>
<feature type="compositionally biased region" description="Basic and acidic residues" evidence="2">
    <location>
        <begin position="1840"/>
        <end position="1857"/>
    </location>
</feature>
<feature type="compositionally biased region" description="Low complexity" evidence="2">
    <location>
        <begin position="1896"/>
        <end position="1911"/>
    </location>
</feature>
<feature type="compositionally biased region" description="Acidic residues" evidence="2">
    <location>
        <begin position="1925"/>
        <end position="1935"/>
    </location>
</feature>
<feature type="compositionally biased region" description="Basic and acidic residues" evidence="2">
    <location>
        <begin position="1936"/>
        <end position="1963"/>
    </location>
</feature>
<feature type="compositionally biased region" description="Basic and acidic residues" evidence="2">
    <location>
        <begin position="1981"/>
        <end position="1997"/>
    </location>
</feature>
<feature type="compositionally biased region" description="Low complexity" evidence="2">
    <location>
        <begin position="2039"/>
        <end position="2050"/>
    </location>
</feature>
<feature type="compositionally biased region" description="Low complexity" evidence="2">
    <location>
        <begin position="2061"/>
        <end position="2083"/>
    </location>
</feature>
<feature type="compositionally biased region" description="Low complexity" evidence="2">
    <location>
        <begin position="2092"/>
        <end position="2104"/>
    </location>
</feature>
<proteinExistence type="inferred from homology"/>
<comment type="function">
    <text evidence="1">Involved in the initiation of assembly of the COPII coat required for the formation of transport vesicles from the endoplasmic reticulum (ER) and the selection of cargo molecules. Also involved in autophagy (By similarity).</text>
</comment>
<comment type="subcellular location">
    <subcellularLocation>
        <location evidence="1">Endoplasmic reticulum membrane</location>
        <topology evidence="1">Peripheral membrane protein</topology>
        <orientation evidence="1">Cytoplasmic side</orientation>
    </subcellularLocation>
</comment>
<comment type="similarity">
    <text evidence="3">Belongs to the SEC16 family.</text>
</comment>
<accession>Q6BXI1</accession>
<gene>
    <name type="primary">SEC16</name>
    <name type="ordered locus">DEHA2B02838g</name>
</gene>
<name>SEC16_DEBHA</name>
<sequence length="2130" mass="232928">MSASFTDDKILRKSSVVEGGEISEELKILEKEPEHEPSEVVIGNDDDVKDDVKDDVKDDVKDDVKDDVKDDLKDDVEDDTIAPNQFEEAIKKNKLDPQDQTAAGDSGRSQPDLSPRTTTGVVKPSSFETKDTDGHDSAEVVSGSATQDDDNRNMDHDPITLVGDKRKSELQEYIPQTEADKEETKDFDPAQEDLTSADKAGKDQTPKVSDASEAKIDSLPWGPETSTDAKLPWETEDTNSDNKTADPIPWEQGSSDEASKNDDNLPWESNKNDAPSSQADNDKLPWESDINDAPSSQAGDDNLPWDSNTNDAPSSQAGDGNLPWDSNTNDAPSSQAEDDKLPWESDINNDVPASQEDPENKESNDSTNVDDLFGGSHNIDFLKEIQKQEESKDTDEVLLDSSENTPSAQPSSQDQDTSQDMRNYSTTQTDISHSEENKLALQSKNVPKGENEKTTENSDIHRPQDTDHFDDLFQNDDHDFLQEVGSSDNKSDPFKFPPDNSAPENKDSDKFETQNKSLDFLEMDDDLLDDEFLEDDTTSQTQTLKSKSNKQTYLPSTTNPSTTPVVPTQEKPKGSAMNKKKNDAYDFPDSLIAHKFKPAARSTNKYAPGSSNHNSPPVASMPPKLHSPSMNAVGSVPVPNEKQATMSQPLSAAVSTQGLQKKSFFEDLPIPVQKQPVKPARAALPRSQMSQSISPTVNPAQPQLQKPVVNPYAKPAMNTVVSPPMNYAQPPGMPQVTNNRGGSHLPAGMVAPPPPSQITGNNNVLPHAQPQPFPNMQNQNLGQNTNSYAPSRKISNPSPNLINTALPKVQGAQSATSPYVPNAGPYAPSSHKRTSSRASSLIGAKSKEVNPYAPASINVPNAQQGISHGIMMPNTASPTAPPAVMNNSIHGRRRGVSNVKSNFYHKEQTAPKVENPNALLQRQFPIFNWSSSKNIAYLIPSAVTNTYNRTSESVNVTDIKYVLKDSHYLSTFPGPFNKLKTKKKDVEKWLESYNEFLIQNNTGMKQDEVLVSQILLALVRFNGDCKSDDFTKAACAVLNPSVDYANDNTHMDMNPISTLANAYRLDNTGINIIWSLLQIGNTEKALEFCLSKGDWALGLMIARFEGPEKFGKVASDYARTTFPFQKSQSKVHHLMPIMLKLFAGNFKSAIDDITNVQAEGEWFIQNWRELVSLVVINKPQHGHEFLCEFSKLLALSGQIIASQICLILAGLPLSSIPSQANGILFSVIGFGSHSFAYSETYEYAMQLSTTNIPPTGFAHLLPLKLKHAQVLADYGLFTESQKYCDAISSIIKATGRSSFFNPVAFQEFQNLLMRISQSGASDSGWFGSKKLTLDKMWDQLDKFIGGDESKAKSGENGTFSKFSPAVSRAPSSLDITSLNNHYPQTSPQVRPDHIRDPLVTTNSAPGTSSENSVLKSNGMSHSRPPPSLYSNNSTTSIQKYAPSSSQVTPKPTLTRNDQSFSSQQQVGNPVYESLQQSRMAPNNSSSQYLPMNQGQSENIKAPSKYSANPQKVYSNNNGSLPYMNPSAQFSSSSIASHQSLHMGISGVNANPLTSVKRPSISNSFSESHVNSNPISGHKHTSSLQSDISLDYPSEFKSMPKPASDNPIAPDTHSSLKRDTENVPETITESRESEKSSELRDSSNSLTMPSEEGHSTVEDSTLPQAPPPKGHSKPNIASSSVAPKKARARANPYAPGAVASRSGGNNKYGPQSSDKYTSKKENTSMLVDTPSDISYNDIFNYGGYKVPKKTEINDTETLHDRNEVKEAPNQESIDTKEEASKTNSYIYPEPPKVASTSQSRNINVDESFDGENINDHDFETSSLHTPNANVPASNLNNSFRTNEKESMFHPYQEGENKSRRTSNFGVDSSFGDFPIPGSPDLTTRANSVIGGPGGLFSSRLSQSQQSALYQQYEVQDDTVKEYIPVVDEEEDEDSEDESSKKEKRKKEEQERQARIEADRAKQRQDAVASQRNQTWWPGFLARKNDDKPKAIRAKLGEKNKFVYDEKLKRWIDKSIPLEEQLKSSAPPPPPAAKKKPTEGSSSSISKPSSSSTPLGPAKQDMAPPASNSSNSAPSLGPSQSRPSQSGPPPPAGPSLANAGLDDLLSLGGGPSSGRKTKKGPRRGYVNLLDQK</sequence>
<dbReference type="EMBL" id="CR382134">
    <property type="protein sequence ID" value="CAG85079.2"/>
    <property type="molecule type" value="Genomic_DNA"/>
</dbReference>
<dbReference type="RefSeq" id="XP_457088.2">
    <property type="nucleotide sequence ID" value="XM_457088.2"/>
</dbReference>
<dbReference type="SMR" id="Q6BXI1"/>
<dbReference type="FunCoup" id="Q6BXI1">
    <property type="interactions" value="113"/>
</dbReference>
<dbReference type="STRING" id="284592.Q6BXI1"/>
<dbReference type="GeneID" id="2913023"/>
<dbReference type="KEGG" id="dha:DEHA2B02838g"/>
<dbReference type="VEuPathDB" id="FungiDB:DEHA2B02838g"/>
<dbReference type="eggNOG" id="KOG1913">
    <property type="taxonomic scope" value="Eukaryota"/>
</dbReference>
<dbReference type="HOGENOM" id="CLU_231080_0_0_1"/>
<dbReference type="InParanoid" id="Q6BXI1"/>
<dbReference type="OMA" id="NQPPPIM"/>
<dbReference type="OrthoDB" id="8918678at2759"/>
<dbReference type="Proteomes" id="UP000000599">
    <property type="component" value="Chromosome B"/>
</dbReference>
<dbReference type="GO" id="GO:0070971">
    <property type="term" value="C:endoplasmic reticulum exit site"/>
    <property type="evidence" value="ECO:0007669"/>
    <property type="project" value="UniProtKB-ARBA"/>
</dbReference>
<dbReference type="GO" id="GO:0005789">
    <property type="term" value="C:endoplasmic reticulum membrane"/>
    <property type="evidence" value="ECO:0007669"/>
    <property type="project" value="UniProtKB-SubCell"/>
</dbReference>
<dbReference type="GO" id="GO:0012507">
    <property type="term" value="C:ER to Golgi transport vesicle membrane"/>
    <property type="evidence" value="ECO:0007669"/>
    <property type="project" value="TreeGrafter"/>
</dbReference>
<dbReference type="GO" id="GO:0006914">
    <property type="term" value="P:autophagy"/>
    <property type="evidence" value="ECO:0007669"/>
    <property type="project" value="UniProtKB-KW"/>
</dbReference>
<dbReference type="GO" id="GO:0007030">
    <property type="term" value="P:Golgi organization"/>
    <property type="evidence" value="ECO:0007669"/>
    <property type="project" value="TreeGrafter"/>
</dbReference>
<dbReference type="GO" id="GO:0046907">
    <property type="term" value="P:intracellular transport"/>
    <property type="evidence" value="ECO:0007669"/>
    <property type="project" value="UniProtKB-ARBA"/>
</dbReference>
<dbReference type="GO" id="GO:0070973">
    <property type="term" value="P:protein localization to endoplasmic reticulum exit site"/>
    <property type="evidence" value="ECO:0007669"/>
    <property type="project" value="TreeGrafter"/>
</dbReference>
<dbReference type="GO" id="GO:0015031">
    <property type="term" value="P:protein transport"/>
    <property type="evidence" value="ECO:0007669"/>
    <property type="project" value="UniProtKB-KW"/>
</dbReference>
<dbReference type="GO" id="GO:0016192">
    <property type="term" value="P:vesicle-mediated transport"/>
    <property type="evidence" value="ECO:0007669"/>
    <property type="project" value="UniProtKB-KW"/>
</dbReference>
<dbReference type="CDD" id="cd09233">
    <property type="entry name" value="ACE1-Sec16-like"/>
    <property type="match status" value="1"/>
</dbReference>
<dbReference type="Gene3D" id="1.20.58.940">
    <property type="match status" value="1"/>
</dbReference>
<dbReference type="Gene3D" id="6.20.50.30">
    <property type="match status" value="1"/>
</dbReference>
<dbReference type="InterPro" id="IPR024340">
    <property type="entry name" value="Sec16_CCD"/>
</dbReference>
<dbReference type="InterPro" id="IPR024298">
    <property type="entry name" value="Sec16_Sec23-bd"/>
</dbReference>
<dbReference type="PANTHER" id="PTHR13402">
    <property type="entry name" value="RGPR-RELATED"/>
    <property type="match status" value="1"/>
</dbReference>
<dbReference type="PANTHER" id="PTHR13402:SF6">
    <property type="entry name" value="SECRETORY 16, ISOFORM I"/>
    <property type="match status" value="1"/>
</dbReference>
<dbReference type="Pfam" id="PF12932">
    <property type="entry name" value="Sec16"/>
    <property type="match status" value="1"/>
</dbReference>
<dbReference type="Pfam" id="PF12931">
    <property type="entry name" value="TPR_Sec16"/>
    <property type="match status" value="1"/>
</dbReference>